<comment type="function">
    <text evidence="1">Cell wall formation. Catalyzes the transfer of a GlcNAc subunit on undecaprenyl-pyrophosphoryl-MurNAc-pentapeptide (lipid intermediate I) to form undecaprenyl-pyrophosphoryl-MurNAc-(pentapeptide)GlcNAc (lipid intermediate II).</text>
</comment>
<comment type="catalytic activity">
    <reaction evidence="1">
        <text>Mur2Ac(oyl-L-Ala-gamma-D-Glu-L-Lys-D-Ala-D-Ala)-di-trans,octa-cis-undecaprenyl diphosphate + UDP-N-acetyl-alpha-D-glucosamine = beta-D-GlcNAc-(1-&gt;4)-Mur2Ac(oyl-L-Ala-gamma-D-Glu-L-Lys-D-Ala-D-Ala)-di-trans,octa-cis-undecaprenyl diphosphate + UDP + H(+)</text>
        <dbReference type="Rhea" id="RHEA:23192"/>
        <dbReference type="ChEBI" id="CHEBI:15378"/>
        <dbReference type="ChEBI" id="CHEBI:57705"/>
        <dbReference type="ChEBI" id="CHEBI:58223"/>
        <dbReference type="ChEBI" id="CHEBI:60032"/>
        <dbReference type="ChEBI" id="CHEBI:60033"/>
        <dbReference type="EC" id="2.4.1.227"/>
    </reaction>
</comment>
<comment type="pathway">
    <text evidence="1">Cell wall biogenesis; peptidoglycan biosynthesis.</text>
</comment>
<comment type="subcellular location">
    <subcellularLocation>
        <location evidence="1">Cell membrane</location>
        <topology evidence="1">Peripheral membrane protein</topology>
        <orientation evidence="1">Cytoplasmic side</orientation>
    </subcellularLocation>
</comment>
<comment type="similarity">
    <text evidence="1">Belongs to the glycosyltransferase 28 family. MurG subfamily.</text>
</comment>
<reference key="1">
    <citation type="journal article" date="2006" name="Proc. Natl. Acad. Sci. U.S.A.">
        <title>Comparative genomics of the lactic acid bacteria.</title>
        <authorList>
            <person name="Makarova K.S."/>
            <person name="Slesarev A."/>
            <person name="Wolf Y.I."/>
            <person name="Sorokin A."/>
            <person name="Mirkin B."/>
            <person name="Koonin E.V."/>
            <person name="Pavlov A."/>
            <person name="Pavlova N."/>
            <person name="Karamychev V."/>
            <person name="Polouchine N."/>
            <person name="Shakhova V."/>
            <person name="Grigoriev I."/>
            <person name="Lou Y."/>
            <person name="Rohksar D."/>
            <person name="Lucas S."/>
            <person name="Huang K."/>
            <person name="Goodstein D.M."/>
            <person name="Hawkins T."/>
            <person name="Plengvidhya V."/>
            <person name="Welker D."/>
            <person name="Hughes J."/>
            <person name="Goh Y."/>
            <person name="Benson A."/>
            <person name="Baldwin K."/>
            <person name="Lee J.-H."/>
            <person name="Diaz-Muniz I."/>
            <person name="Dosti B."/>
            <person name="Smeianov V."/>
            <person name="Wechter W."/>
            <person name="Barabote R."/>
            <person name="Lorca G."/>
            <person name="Altermann E."/>
            <person name="Barrangou R."/>
            <person name="Ganesan B."/>
            <person name="Xie Y."/>
            <person name="Rawsthorne H."/>
            <person name="Tamir D."/>
            <person name="Parker C."/>
            <person name="Breidt F."/>
            <person name="Broadbent J.R."/>
            <person name="Hutkins R."/>
            <person name="O'Sullivan D."/>
            <person name="Steele J."/>
            <person name="Unlu G."/>
            <person name="Saier M.H. Jr."/>
            <person name="Klaenhammer T."/>
            <person name="Richardson P."/>
            <person name="Kozyavkin S."/>
            <person name="Weimer B.C."/>
            <person name="Mills D.A."/>
        </authorList>
    </citation>
    <scope>NUCLEOTIDE SEQUENCE [LARGE SCALE GENOMIC DNA]</scope>
    <source>
        <strain>ATCC 25745 / CCUG 21536 / LMG 10740 / 183-1w</strain>
    </source>
</reference>
<sequence length="362" mass="39241">MRLMVSGGGTGGHIYPALALIKQVKQSEPDSQILYVGTSKGLESKIVPDSGIDFKTINIQGFKRSLSLENFKTIGLFLSSVVKARKMVKEFKPDVVLGTGGYVSGAVVFAASMMGVPTVIHEQNSVVGVTNKFLSKFVKKIAISFEAAASQFPTKKVVLTGNPRATEVAQIKPSGLSQFGLDDKVPTVLIFGGSRGAEKINQVTIDTLEELMERPYQTIFVTGRVHFERLTKDIDLAKYQGKIAILPYIANMPEILSNMEVIVGRAGATSLAEITSLGIPSILIPSPYVTNDHQTKNAMSLVNNDAAEIIKESDLTSEALINTLDTLMLDQKFRNVMAENAKKMGQPRAAENLYDVLKSVSK</sequence>
<protein>
    <recommendedName>
        <fullName evidence="1">UDP-N-acetylglucosamine--N-acetylmuramyl-(pentapeptide) pyrophosphoryl-undecaprenol N-acetylglucosamine transferase</fullName>
        <ecNumber evidence="1">2.4.1.227</ecNumber>
    </recommendedName>
    <alternativeName>
        <fullName evidence="1">Undecaprenyl-PP-MurNAc-pentapeptide-UDPGlcNAc GlcNAc transferase</fullName>
    </alternativeName>
</protein>
<feature type="chain" id="PRO_1000002676" description="UDP-N-acetylglucosamine--N-acetylmuramyl-(pentapeptide) pyrophosphoryl-undecaprenol N-acetylglucosamine transferase">
    <location>
        <begin position="1"/>
        <end position="362"/>
    </location>
</feature>
<feature type="binding site" evidence="1">
    <location>
        <begin position="10"/>
        <end position="12"/>
    </location>
    <ligand>
        <name>UDP-N-acetyl-alpha-D-glucosamine</name>
        <dbReference type="ChEBI" id="CHEBI:57705"/>
    </ligand>
</feature>
<feature type="binding site" evidence="1">
    <location>
        <position position="124"/>
    </location>
    <ligand>
        <name>UDP-N-acetyl-alpha-D-glucosamine</name>
        <dbReference type="ChEBI" id="CHEBI:57705"/>
    </ligand>
</feature>
<feature type="binding site" evidence="1">
    <location>
        <position position="194"/>
    </location>
    <ligand>
        <name>UDP-N-acetyl-alpha-D-glucosamine</name>
        <dbReference type="ChEBI" id="CHEBI:57705"/>
    </ligand>
</feature>
<feature type="binding site" evidence="1">
    <location>
        <position position="249"/>
    </location>
    <ligand>
        <name>UDP-N-acetyl-alpha-D-glucosamine</name>
        <dbReference type="ChEBI" id="CHEBI:57705"/>
    </ligand>
</feature>
<feature type="binding site" evidence="1">
    <location>
        <position position="294"/>
    </location>
    <ligand>
        <name>UDP-N-acetyl-alpha-D-glucosamine</name>
        <dbReference type="ChEBI" id="CHEBI:57705"/>
    </ligand>
</feature>
<name>MURG_PEDPA</name>
<gene>
    <name evidence="1" type="primary">murG</name>
    <name type="ordered locus">PEPE_1186</name>
</gene>
<accession>Q03EY2</accession>
<dbReference type="EC" id="2.4.1.227" evidence="1"/>
<dbReference type="EMBL" id="CP000422">
    <property type="protein sequence ID" value="ABJ68240.1"/>
    <property type="molecule type" value="Genomic_DNA"/>
</dbReference>
<dbReference type="RefSeq" id="WP_011673542.1">
    <property type="nucleotide sequence ID" value="NC_008525.1"/>
</dbReference>
<dbReference type="SMR" id="Q03EY2"/>
<dbReference type="STRING" id="278197.PEPE_1186"/>
<dbReference type="CAZy" id="GT28">
    <property type="family name" value="Glycosyltransferase Family 28"/>
</dbReference>
<dbReference type="GeneID" id="33062170"/>
<dbReference type="KEGG" id="ppe:PEPE_1186"/>
<dbReference type="eggNOG" id="COG0707">
    <property type="taxonomic scope" value="Bacteria"/>
</dbReference>
<dbReference type="HOGENOM" id="CLU_037404_0_1_9"/>
<dbReference type="OrthoDB" id="9808936at2"/>
<dbReference type="UniPathway" id="UPA00219"/>
<dbReference type="Proteomes" id="UP000000773">
    <property type="component" value="Chromosome"/>
</dbReference>
<dbReference type="GO" id="GO:0005886">
    <property type="term" value="C:plasma membrane"/>
    <property type="evidence" value="ECO:0007669"/>
    <property type="project" value="UniProtKB-SubCell"/>
</dbReference>
<dbReference type="GO" id="GO:0050511">
    <property type="term" value="F:undecaprenyldiphospho-muramoylpentapeptide beta-N-acetylglucosaminyltransferase activity"/>
    <property type="evidence" value="ECO:0007669"/>
    <property type="project" value="UniProtKB-UniRule"/>
</dbReference>
<dbReference type="GO" id="GO:0005975">
    <property type="term" value="P:carbohydrate metabolic process"/>
    <property type="evidence" value="ECO:0007669"/>
    <property type="project" value="InterPro"/>
</dbReference>
<dbReference type="GO" id="GO:0051301">
    <property type="term" value="P:cell division"/>
    <property type="evidence" value="ECO:0007669"/>
    <property type="project" value="UniProtKB-KW"/>
</dbReference>
<dbReference type="GO" id="GO:0071555">
    <property type="term" value="P:cell wall organization"/>
    <property type="evidence" value="ECO:0007669"/>
    <property type="project" value="UniProtKB-KW"/>
</dbReference>
<dbReference type="GO" id="GO:0030259">
    <property type="term" value="P:lipid glycosylation"/>
    <property type="evidence" value="ECO:0007669"/>
    <property type="project" value="UniProtKB-UniRule"/>
</dbReference>
<dbReference type="GO" id="GO:0009252">
    <property type="term" value="P:peptidoglycan biosynthetic process"/>
    <property type="evidence" value="ECO:0007669"/>
    <property type="project" value="UniProtKB-UniRule"/>
</dbReference>
<dbReference type="GO" id="GO:0008360">
    <property type="term" value="P:regulation of cell shape"/>
    <property type="evidence" value="ECO:0007669"/>
    <property type="project" value="UniProtKB-KW"/>
</dbReference>
<dbReference type="CDD" id="cd03785">
    <property type="entry name" value="GT28_MurG"/>
    <property type="match status" value="1"/>
</dbReference>
<dbReference type="Gene3D" id="3.40.50.2000">
    <property type="entry name" value="Glycogen Phosphorylase B"/>
    <property type="match status" value="2"/>
</dbReference>
<dbReference type="HAMAP" id="MF_00033">
    <property type="entry name" value="MurG"/>
    <property type="match status" value="1"/>
</dbReference>
<dbReference type="InterPro" id="IPR006009">
    <property type="entry name" value="GlcNAc_MurG"/>
</dbReference>
<dbReference type="InterPro" id="IPR007235">
    <property type="entry name" value="Glyco_trans_28_C"/>
</dbReference>
<dbReference type="InterPro" id="IPR004276">
    <property type="entry name" value="GlycoTrans_28_N"/>
</dbReference>
<dbReference type="NCBIfam" id="TIGR01133">
    <property type="entry name" value="murG"/>
    <property type="match status" value="1"/>
</dbReference>
<dbReference type="PANTHER" id="PTHR21015:SF22">
    <property type="entry name" value="GLYCOSYLTRANSFERASE"/>
    <property type="match status" value="1"/>
</dbReference>
<dbReference type="PANTHER" id="PTHR21015">
    <property type="entry name" value="UDP-N-ACETYLGLUCOSAMINE--N-ACETYLMURAMYL-(PENTAPEPTIDE) PYROPHOSPHORYL-UNDECAPRENOL N-ACETYLGLUCOSAMINE TRANSFERASE 1"/>
    <property type="match status" value="1"/>
</dbReference>
<dbReference type="Pfam" id="PF04101">
    <property type="entry name" value="Glyco_tran_28_C"/>
    <property type="match status" value="1"/>
</dbReference>
<dbReference type="Pfam" id="PF03033">
    <property type="entry name" value="Glyco_transf_28"/>
    <property type="match status" value="1"/>
</dbReference>
<dbReference type="SUPFAM" id="SSF53756">
    <property type="entry name" value="UDP-Glycosyltransferase/glycogen phosphorylase"/>
    <property type="match status" value="1"/>
</dbReference>
<keyword id="KW-0131">Cell cycle</keyword>
<keyword id="KW-0132">Cell division</keyword>
<keyword id="KW-1003">Cell membrane</keyword>
<keyword id="KW-0133">Cell shape</keyword>
<keyword id="KW-0961">Cell wall biogenesis/degradation</keyword>
<keyword id="KW-0328">Glycosyltransferase</keyword>
<keyword id="KW-0472">Membrane</keyword>
<keyword id="KW-0573">Peptidoglycan synthesis</keyword>
<keyword id="KW-0808">Transferase</keyword>
<proteinExistence type="inferred from homology"/>
<evidence type="ECO:0000255" key="1">
    <source>
        <dbReference type="HAMAP-Rule" id="MF_00033"/>
    </source>
</evidence>
<organism>
    <name type="scientific">Pediococcus pentosaceus (strain ATCC 25745 / CCUG 21536 / LMG 10740 / 183-1w)</name>
    <dbReference type="NCBI Taxonomy" id="278197"/>
    <lineage>
        <taxon>Bacteria</taxon>
        <taxon>Bacillati</taxon>
        <taxon>Bacillota</taxon>
        <taxon>Bacilli</taxon>
        <taxon>Lactobacillales</taxon>
        <taxon>Lactobacillaceae</taxon>
        <taxon>Pediococcus</taxon>
    </lineage>
</organism>